<proteinExistence type="inferred from homology"/>
<evidence type="ECO:0000250" key="1"/>
<evidence type="ECO:0000255" key="2"/>
<evidence type="ECO:0000305" key="3"/>
<protein>
    <recommendedName>
        <fullName>Na(+)/H(+) antiporter subunit G1</fullName>
    </recommendedName>
    <alternativeName>
        <fullName>Mnh complex subunit G1</fullName>
    </alternativeName>
</protein>
<sequence>MIKIILISLALIFVIIGALISALAAIGLLRLEDVYSRAHAAGKASTLGAMSLLFGTFLYFIATQGFVNMQLIVAIIFVLITGPLSSHMIMKAAYNIKTPYTKKTKVDEISEDLKDTKL</sequence>
<feature type="chain" id="PRO_0000086857" description="Na(+)/H(+) antiporter subunit G1">
    <location>
        <begin position="1"/>
        <end position="118"/>
    </location>
</feature>
<feature type="transmembrane region" description="Helical" evidence="2">
    <location>
        <begin position="7"/>
        <end position="29"/>
    </location>
</feature>
<feature type="transmembrane region" description="Helical" evidence="2">
    <location>
        <begin position="44"/>
        <end position="66"/>
    </location>
</feature>
<feature type="transmembrane region" description="Helical" evidence="2">
    <location>
        <begin position="71"/>
        <end position="90"/>
    </location>
</feature>
<reference key="1">
    <citation type="journal article" date="2001" name="Lancet">
        <title>Whole genome sequencing of meticillin-resistant Staphylococcus aureus.</title>
        <authorList>
            <person name="Kuroda M."/>
            <person name="Ohta T."/>
            <person name="Uchiyama I."/>
            <person name="Baba T."/>
            <person name="Yuzawa H."/>
            <person name="Kobayashi I."/>
            <person name="Cui L."/>
            <person name="Oguchi A."/>
            <person name="Aoki K."/>
            <person name="Nagai Y."/>
            <person name="Lian J.-Q."/>
            <person name="Ito T."/>
            <person name="Kanamori M."/>
            <person name="Matsumaru H."/>
            <person name="Maruyama A."/>
            <person name="Murakami H."/>
            <person name="Hosoyama A."/>
            <person name="Mizutani-Ui Y."/>
            <person name="Takahashi N.K."/>
            <person name="Sawano T."/>
            <person name="Inoue R."/>
            <person name="Kaito C."/>
            <person name="Sekimizu K."/>
            <person name="Hirakawa H."/>
            <person name="Kuhara S."/>
            <person name="Goto S."/>
            <person name="Yabuzaki J."/>
            <person name="Kanehisa M."/>
            <person name="Yamashita A."/>
            <person name="Oshima K."/>
            <person name="Furuya K."/>
            <person name="Yoshino C."/>
            <person name="Shiba T."/>
            <person name="Hattori M."/>
            <person name="Ogasawara N."/>
            <person name="Hayashi H."/>
            <person name="Hiramatsu K."/>
        </authorList>
    </citation>
    <scope>NUCLEOTIDE SEQUENCE [LARGE SCALE GENOMIC DNA]</scope>
    <source>
        <strain>Mu50 / ATCC 700699</strain>
    </source>
</reference>
<dbReference type="EMBL" id="BA000017">
    <property type="protein sequence ID" value="BAB57108.1"/>
    <property type="molecule type" value="Genomic_DNA"/>
</dbReference>
<dbReference type="RefSeq" id="WP_000590451.1">
    <property type="nucleotide sequence ID" value="NC_002758.2"/>
</dbReference>
<dbReference type="SMR" id="P60696"/>
<dbReference type="GeneID" id="98345267"/>
<dbReference type="KEGG" id="sav:SAV0946"/>
<dbReference type="HOGENOM" id="CLU_121334_0_3_9"/>
<dbReference type="PhylomeDB" id="P60696"/>
<dbReference type="Proteomes" id="UP000002481">
    <property type="component" value="Chromosome"/>
</dbReference>
<dbReference type="GO" id="GO:0005886">
    <property type="term" value="C:plasma membrane"/>
    <property type="evidence" value="ECO:0007669"/>
    <property type="project" value="UniProtKB-SubCell"/>
</dbReference>
<dbReference type="GO" id="GO:0015385">
    <property type="term" value="F:sodium:proton antiporter activity"/>
    <property type="evidence" value="ECO:0007669"/>
    <property type="project" value="TreeGrafter"/>
</dbReference>
<dbReference type="InterPro" id="IPR005133">
    <property type="entry name" value="PhaG_MnhG_YufB"/>
</dbReference>
<dbReference type="NCBIfam" id="TIGR01300">
    <property type="entry name" value="CPA3_mnhG_phaG"/>
    <property type="match status" value="1"/>
</dbReference>
<dbReference type="NCBIfam" id="NF009237">
    <property type="entry name" value="PRK12587.1"/>
    <property type="match status" value="1"/>
</dbReference>
<dbReference type="NCBIfam" id="NF009314">
    <property type="entry name" value="PRK12674.1-2"/>
    <property type="match status" value="1"/>
</dbReference>
<dbReference type="PANTHER" id="PTHR34703">
    <property type="entry name" value="ANTIPORTER SUBUNIT MNHG2-RELATED"/>
    <property type="match status" value="1"/>
</dbReference>
<dbReference type="PANTHER" id="PTHR34703:SF1">
    <property type="entry name" value="ANTIPORTER SUBUNIT MNHG2-RELATED"/>
    <property type="match status" value="1"/>
</dbReference>
<dbReference type="Pfam" id="PF03334">
    <property type="entry name" value="PhaG_MnhG_YufB"/>
    <property type="match status" value="1"/>
</dbReference>
<comment type="function">
    <text evidence="1">Mnh complex is a Na(+)/H(+) antiporter involved in Na(+) excretion.</text>
</comment>
<comment type="subunit">
    <text evidence="1">May form a heterooligomeric complex that consists of seven subunits: mnhA1, mnhB1, mnhC1, mnhD1, mnhE1, mnhF1 and mnhG1.</text>
</comment>
<comment type="subcellular location">
    <subcellularLocation>
        <location evidence="3">Cell membrane</location>
        <topology evidence="3">Multi-pass membrane protein</topology>
    </subcellularLocation>
</comment>
<comment type="similarity">
    <text evidence="3">Belongs to the CPA3 antiporters (TC 2.A.63) subunit G family.</text>
</comment>
<organism>
    <name type="scientific">Staphylococcus aureus (strain Mu50 / ATCC 700699)</name>
    <dbReference type="NCBI Taxonomy" id="158878"/>
    <lineage>
        <taxon>Bacteria</taxon>
        <taxon>Bacillati</taxon>
        <taxon>Bacillota</taxon>
        <taxon>Bacilli</taxon>
        <taxon>Bacillales</taxon>
        <taxon>Staphylococcaceae</taxon>
        <taxon>Staphylococcus</taxon>
    </lineage>
</organism>
<name>MNHG1_STAAM</name>
<accession>P60696</accession>
<accession>Q9ZNG0</accession>
<keyword id="KW-0050">Antiport</keyword>
<keyword id="KW-1003">Cell membrane</keyword>
<keyword id="KW-0375">Hydrogen ion transport</keyword>
<keyword id="KW-0406">Ion transport</keyword>
<keyword id="KW-0472">Membrane</keyword>
<keyword id="KW-0915">Sodium</keyword>
<keyword id="KW-0739">Sodium transport</keyword>
<keyword id="KW-0812">Transmembrane</keyword>
<keyword id="KW-1133">Transmembrane helix</keyword>
<keyword id="KW-0813">Transport</keyword>
<gene>
    <name type="primary">mnhG1</name>
    <name type="ordered locus">SAV0946</name>
</gene>